<comment type="function">
    <text evidence="1">DNA ligase that seals nicks in double-stranded DNA during DNA replication, DNA recombination and DNA repair.</text>
</comment>
<comment type="catalytic activity">
    <reaction evidence="1">
        <text>ATP + (deoxyribonucleotide)n-3'-hydroxyl + 5'-phospho-(deoxyribonucleotide)m = (deoxyribonucleotide)n+m + AMP + diphosphate.</text>
        <dbReference type="EC" id="6.5.1.1"/>
    </reaction>
</comment>
<comment type="cofactor">
    <cofactor evidence="1">
        <name>Mg(2+)</name>
        <dbReference type="ChEBI" id="CHEBI:18420"/>
    </cofactor>
</comment>
<comment type="similarity">
    <text evidence="1">Belongs to the ATP-dependent DNA ligase family.</text>
</comment>
<reference key="1">
    <citation type="journal article" date="2002" name="J. Bacteriol.">
        <title>Whole-genome comparison of Mycobacterium tuberculosis clinical and laboratory strains.</title>
        <authorList>
            <person name="Fleischmann R.D."/>
            <person name="Alland D."/>
            <person name="Eisen J.A."/>
            <person name="Carpenter L."/>
            <person name="White O."/>
            <person name="Peterson J.D."/>
            <person name="DeBoy R.T."/>
            <person name="Dodson R.J."/>
            <person name="Gwinn M.L."/>
            <person name="Haft D.H."/>
            <person name="Hickey E.K."/>
            <person name="Kolonay J.F."/>
            <person name="Nelson W.C."/>
            <person name="Umayam L.A."/>
            <person name="Ermolaeva M.D."/>
            <person name="Salzberg S.L."/>
            <person name="Delcher A."/>
            <person name="Utterback T.R."/>
            <person name="Weidman J.F."/>
            <person name="Khouri H.M."/>
            <person name="Gill J."/>
            <person name="Mikula A."/>
            <person name="Bishai W."/>
            <person name="Jacobs W.R. Jr."/>
            <person name="Venter J.C."/>
            <person name="Fraser C.M."/>
        </authorList>
    </citation>
    <scope>NUCLEOTIDE SEQUENCE [LARGE SCALE GENOMIC DNA]</scope>
    <source>
        <strain>CDC 1551 / Oshkosh</strain>
    </source>
</reference>
<proteinExistence type="inferred from homology"/>
<feature type="chain" id="PRO_0000427061" description="DNA ligase B">
    <location>
        <begin position="1"/>
        <end position="507"/>
    </location>
</feature>
<feature type="region of interest" description="Not required for adenylyltransferase activity, required for nick joining">
    <location>
        <begin position="1"/>
        <end position="172"/>
    </location>
</feature>
<feature type="active site" description="N6-AMP-lysine intermediate" evidence="1">
    <location>
        <position position="211"/>
    </location>
</feature>
<feature type="binding site" evidence="1">
    <location>
        <position position="209"/>
    </location>
    <ligand>
        <name>ATP</name>
        <dbReference type="ChEBI" id="CHEBI:30616"/>
    </ligand>
</feature>
<feature type="binding site" evidence="1">
    <location>
        <position position="216"/>
    </location>
    <ligand>
        <name>ATP</name>
        <dbReference type="ChEBI" id="CHEBI:30616"/>
    </ligand>
</feature>
<feature type="binding site" evidence="1">
    <location>
        <position position="231"/>
    </location>
    <ligand>
        <name>ATP</name>
        <dbReference type="ChEBI" id="CHEBI:30616"/>
    </ligand>
</feature>
<feature type="binding site" evidence="1">
    <location>
        <position position="260"/>
    </location>
    <ligand>
        <name>ATP</name>
        <dbReference type="ChEBI" id="CHEBI:30616"/>
    </ligand>
</feature>
<feature type="binding site" evidence="1">
    <location>
        <position position="300"/>
    </location>
    <ligand>
        <name>ATP</name>
        <dbReference type="ChEBI" id="CHEBI:30616"/>
    </ligand>
</feature>
<feature type="binding site" evidence="1">
    <location>
        <position position="372"/>
    </location>
    <ligand>
        <name>ATP</name>
        <dbReference type="ChEBI" id="CHEBI:30616"/>
    </ligand>
</feature>
<feature type="binding site" evidence="1">
    <location>
        <position position="378"/>
    </location>
    <ligand>
        <name>ATP</name>
        <dbReference type="ChEBI" id="CHEBI:30616"/>
    </ligand>
</feature>
<gene>
    <name type="primary">ligB</name>
    <name type="ordered locus">MT3148</name>
</gene>
<sequence length="507" mass="53727">MLLHDVAITSMDVAATSSRLTKVARIAALLHRAAPDTQLVTIIVSWLSGELPQRHIGVGWAALRSLPPPAPQPALTVTGVDATLSKIGTLSGKGSQAQRAALVAELFSAATEAEQTFLLRLLGGELRQGAKGGIMADAVAQAAGLPAATVQRAAMLGGDLAAAAAAGLSGAALDTFTLRVGRPIGPMLAQTATSVHDALERHGGTTIFEAKLDGARVQIHRANDQVRIYTRSLDDVTARLPEVVEATLALPVRDLVADGEAIALCPDNRPQRFQVTASRFGRSVDVAAARATQPLSVFFFDILHRDGTDLLEAPTTERLAALDALVPARHRVDRLITSDPTDAANFLDATLAAGHEGVMAKAPAARYLAGRRGAGWLKVKPVHTLDLVVLAVEWGSGRRRGKLSNIHLGARDPATGGFVMVGKTFKGMTDAMLDWQTTRFHEIAVGPTDGYVVQLRPEQVVEVALDGVQRSSRYPGGLALRFARVVRYRADKDPAEADTIDAVRALY</sequence>
<protein>
    <recommendedName>
        <fullName>DNA ligase B</fullName>
        <shortName>LigB</shortName>
        <ecNumber evidence="1">6.5.1.1</ecNumber>
    </recommendedName>
    <alternativeName>
        <fullName evidence="1">Polydeoxyribonucleotide synthase [ATP]</fullName>
    </alternativeName>
</protein>
<organism>
    <name type="scientific">Mycobacterium tuberculosis (strain CDC 1551 / Oshkosh)</name>
    <dbReference type="NCBI Taxonomy" id="83331"/>
    <lineage>
        <taxon>Bacteria</taxon>
        <taxon>Bacillati</taxon>
        <taxon>Actinomycetota</taxon>
        <taxon>Actinomycetes</taxon>
        <taxon>Mycobacteriales</taxon>
        <taxon>Mycobacteriaceae</taxon>
        <taxon>Mycobacterium</taxon>
        <taxon>Mycobacterium tuberculosis complex</taxon>
    </lineage>
</organism>
<keyword id="KW-0067">ATP-binding</keyword>
<keyword id="KW-0131">Cell cycle</keyword>
<keyword id="KW-0132">Cell division</keyword>
<keyword id="KW-0227">DNA damage</keyword>
<keyword id="KW-0233">DNA recombination</keyword>
<keyword id="KW-0234">DNA repair</keyword>
<keyword id="KW-0235">DNA replication</keyword>
<keyword id="KW-0436">Ligase</keyword>
<keyword id="KW-0460">Magnesium</keyword>
<keyword id="KW-0479">Metal-binding</keyword>
<keyword id="KW-0547">Nucleotide-binding</keyword>
<keyword id="KW-1185">Reference proteome</keyword>
<evidence type="ECO:0000255" key="1">
    <source>
        <dbReference type="HAMAP-Rule" id="MF_00407"/>
    </source>
</evidence>
<dbReference type="EC" id="6.5.1.1" evidence="1"/>
<dbReference type="EMBL" id="AE000516">
    <property type="protein sequence ID" value="AAK47481.1"/>
    <property type="molecule type" value="Genomic_DNA"/>
</dbReference>
<dbReference type="PIR" id="G70649">
    <property type="entry name" value="G70649"/>
</dbReference>
<dbReference type="RefSeq" id="WP_003415991.1">
    <property type="nucleotide sequence ID" value="NZ_KK341227.1"/>
</dbReference>
<dbReference type="SMR" id="P9WNV4"/>
<dbReference type="KEGG" id="mtc:MT3148"/>
<dbReference type="PATRIC" id="fig|83331.31.peg.3392"/>
<dbReference type="HOGENOM" id="CLU_005138_6_1_11"/>
<dbReference type="Proteomes" id="UP000001020">
    <property type="component" value="Chromosome"/>
</dbReference>
<dbReference type="GO" id="GO:0005524">
    <property type="term" value="F:ATP binding"/>
    <property type="evidence" value="ECO:0007669"/>
    <property type="project" value="UniProtKB-UniRule"/>
</dbReference>
<dbReference type="GO" id="GO:0003677">
    <property type="term" value="F:DNA binding"/>
    <property type="evidence" value="ECO:0007669"/>
    <property type="project" value="InterPro"/>
</dbReference>
<dbReference type="GO" id="GO:0003910">
    <property type="term" value="F:DNA ligase (ATP) activity"/>
    <property type="evidence" value="ECO:0007669"/>
    <property type="project" value="UniProtKB-UniRule"/>
</dbReference>
<dbReference type="GO" id="GO:0046872">
    <property type="term" value="F:metal ion binding"/>
    <property type="evidence" value="ECO:0007669"/>
    <property type="project" value="UniProtKB-KW"/>
</dbReference>
<dbReference type="GO" id="GO:0051301">
    <property type="term" value="P:cell division"/>
    <property type="evidence" value="ECO:0007669"/>
    <property type="project" value="UniProtKB-KW"/>
</dbReference>
<dbReference type="GO" id="GO:0071897">
    <property type="term" value="P:DNA biosynthetic process"/>
    <property type="evidence" value="ECO:0007669"/>
    <property type="project" value="InterPro"/>
</dbReference>
<dbReference type="GO" id="GO:0006310">
    <property type="term" value="P:DNA recombination"/>
    <property type="evidence" value="ECO:0007669"/>
    <property type="project" value="UniProtKB-UniRule"/>
</dbReference>
<dbReference type="GO" id="GO:0006281">
    <property type="term" value="P:DNA repair"/>
    <property type="evidence" value="ECO:0007669"/>
    <property type="project" value="UniProtKB-UniRule"/>
</dbReference>
<dbReference type="GO" id="GO:0006260">
    <property type="term" value="P:DNA replication"/>
    <property type="evidence" value="ECO:0007669"/>
    <property type="project" value="UniProtKB-UniRule"/>
</dbReference>
<dbReference type="CDD" id="cd07901">
    <property type="entry name" value="Adenylation_DNA_ligase_Arch_LigB"/>
    <property type="match status" value="1"/>
</dbReference>
<dbReference type="CDD" id="cd07972">
    <property type="entry name" value="OBF_DNA_ligase_Arch_LigB"/>
    <property type="match status" value="1"/>
</dbReference>
<dbReference type="FunFam" id="1.10.3260.10:FF:000009">
    <property type="entry name" value="Probable DNA ligase"/>
    <property type="match status" value="1"/>
</dbReference>
<dbReference type="FunFam" id="2.40.50.140:FF:000163">
    <property type="entry name" value="Probable DNA ligase"/>
    <property type="match status" value="1"/>
</dbReference>
<dbReference type="FunFam" id="3.30.470.30:FF:000012">
    <property type="entry name" value="Probable DNA ligase"/>
    <property type="match status" value="1"/>
</dbReference>
<dbReference type="Gene3D" id="1.10.3260.10">
    <property type="entry name" value="DNA ligase, ATP-dependent, N-terminal domain"/>
    <property type="match status" value="1"/>
</dbReference>
<dbReference type="Gene3D" id="3.30.470.30">
    <property type="entry name" value="DNA ligase/mRNA capping enzyme"/>
    <property type="match status" value="1"/>
</dbReference>
<dbReference type="Gene3D" id="2.40.50.140">
    <property type="entry name" value="Nucleic acid-binding proteins"/>
    <property type="match status" value="1"/>
</dbReference>
<dbReference type="HAMAP" id="MF_00407">
    <property type="entry name" value="DNA_ligase"/>
    <property type="match status" value="1"/>
</dbReference>
<dbReference type="InterPro" id="IPR050191">
    <property type="entry name" value="ATP-dep_DNA_ligase"/>
</dbReference>
<dbReference type="InterPro" id="IPR022865">
    <property type="entry name" value="DNA_ligae_ATP-dep_bac/arc"/>
</dbReference>
<dbReference type="InterPro" id="IPR000977">
    <property type="entry name" value="DNA_ligase_ATP-dep"/>
</dbReference>
<dbReference type="InterPro" id="IPR012309">
    <property type="entry name" value="DNA_ligase_ATP-dep_C"/>
</dbReference>
<dbReference type="InterPro" id="IPR012310">
    <property type="entry name" value="DNA_ligase_ATP-dep_cent"/>
</dbReference>
<dbReference type="InterPro" id="IPR016059">
    <property type="entry name" value="DNA_ligase_ATP-dep_CS"/>
</dbReference>
<dbReference type="InterPro" id="IPR012308">
    <property type="entry name" value="DNA_ligase_ATP-dep_N"/>
</dbReference>
<dbReference type="InterPro" id="IPR036599">
    <property type="entry name" value="DNA_ligase_N_sf"/>
</dbReference>
<dbReference type="InterPro" id="IPR012340">
    <property type="entry name" value="NA-bd_OB-fold"/>
</dbReference>
<dbReference type="NCBIfam" id="TIGR00574">
    <property type="entry name" value="dnl1"/>
    <property type="match status" value="1"/>
</dbReference>
<dbReference type="NCBIfam" id="NF002868">
    <property type="entry name" value="PRK03180.1"/>
    <property type="match status" value="1"/>
</dbReference>
<dbReference type="PANTHER" id="PTHR45674">
    <property type="entry name" value="DNA LIGASE 1/3 FAMILY MEMBER"/>
    <property type="match status" value="1"/>
</dbReference>
<dbReference type="PANTHER" id="PTHR45674:SF13">
    <property type="entry name" value="DNA LIGASE-RELATED"/>
    <property type="match status" value="1"/>
</dbReference>
<dbReference type="Pfam" id="PF04679">
    <property type="entry name" value="DNA_ligase_A_C"/>
    <property type="match status" value="1"/>
</dbReference>
<dbReference type="Pfam" id="PF01068">
    <property type="entry name" value="DNA_ligase_A_M"/>
    <property type="match status" value="1"/>
</dbReference>
<dbReference type="Pfam" id="PF04675">
    <property type="entry name" value="DNA_ligase_A_N"/>
    <property type="match status" value="1"/>
</dbReference>
<dbReference type="SUPFAM" id="SSF117018">
    <property type="entry name" value="ATP-dependent DNA ligase DNA-binding domain"/>
    <property type="match status" value="1"/>
</dbReference>
<dbReference type="SUPFAM" id="SSF56091">
    <property type="entry name" value="DNA ligase/mRNA capping enzyme, catalytic domain"/>
    <property type="match status" value="1"/>
</dbReference>
<dbReference type="SUPFAM" id="SSF50249">
    <property type="entry name" value="Nucleic acid-binding proteins"/>
    <property type="match status" value="1"/>
</dbReference>
<dbReference type="PROSITE" id="PS00697">
    <property type="entry name" value="DNA_LIGASE_A1"/>
    <property type="match status" value="1"/>
</dbReference>
<dbReference type="PROSITE" id="PS50160">
    <property type="entry name" value="DNA_LIGASE_A3"/>
    <property type="match status" value="1"/>
</dbReference>
<name>DNLI_MYCTO</name>
<accession>P9WNV4</accession>
<accession>L0TBG5</accession>
<accession>P95096</accession>
<accession>Q7D671</accession>